<reference key="1">
    <citation type="journal article" date="1994" name="Arch. Virol.">
        <title>Nucleotide sequence of the 3' terminal region of the RNA of two filamentous grapevine viruses.</title>
        <authorList>
            <person name="Minafra A."/>
            <person name="Saldarelli P."/>
            <person name="Grieco F."/>
            <person name="Martelli G.P."/>
        </authorList>
    </citation>
    <scope>NUCLEOTIDE SEQUENCE [GENOMIC RNA] OF 1-480</scope>
</reference>
<reference key="2">
    <citation type="submission" date="2006-02" db="EMBL/GenBank/DDBJ databases">
        <authorList>
            <person name="Minafra A."/>
        </authorList>
    </citation>
    <scope>NUCLEOTIDE SEQUENCE [GENOMIC RNA]</scope>
</reference>
<evidence type="ECO:0000255" key="1">
    <source>
        <dbReference type="PROSITE-ProRule" id="PRU00539"/>
    </source>
</evidence>
<evidence type="ECO:0000255" key="2">
    <source>
        <dbReference type="PROSITE-ProRule" id="PRU00805"/>
    </source>
</evidence>
<evidence type="ECO:0000255" key="3">
    <source>
        <dbReference type="PROSITE-ProRule" id="PRU01079"/>
    </source>
</evidence>
<evidence type="ECO:0000305" key="4"/>
<proteinExistence type="inferred from homology"/>
<gene>
    <name type="ORF">ORF1</name>
</gene>
<keyword id="KW-0067">ATP-binding</keyword>
<keyword id="KW-0223">Dioxygenase</keyword>
<keyword id="KW-0347">Helicase</keyword>
<keyword id="KW-0378">Hydrolase</keyword>
<keyword id="KW-0408">Iron</keyword>
<keyword id="KW-0479">Metal-binding</keyword>
<keyword id="KW-0547">Nucleotide-binding</keyword>
<keyword id="KW-0548">Nucleotidyltransferase</keyword>
<keyword id="KW-0560">Oxidoreductase</keyword>
<keyword id="KW-1185">Reference proteome</keyword>
<keyword id="KW-0696">RNA-directed RNA polymerase</keyword>
<keyword id="KW-0808">Transferase</keyword>
<keyword id="KW-0693">Viral RNA replication</keyword>
<dbReference type="EC" id="2.7.7.48"/>
<dbReference type="EC" id="3.6.4.13"/>
<dbReference type="EMBL" id="X75433">
    <property type="protein sequence ID" value="CAA53182.1"/>
    <property type="molecule type" value="Genomic_RNA"/>
</dbReference>
<dbReference type="PIR" id="S77910">
    <property type="entry name" value="S77910"/>
</dbReference>
<dbReference type="RefSeq" id="NP_619662.1">
    <property type="nucleotide sequence ID" value="NC_003604.2"/>
</dbReference>
<dbReference type="GeneID" id="940186"/>
<dbReference type="KEGG" id="vg:940186"/>
<dbReference type="Proteomes" id="UP000000679">
    <property type="component" value="Segment"/>
</dbReference>
<dbReference type="GO" id="GO:0005524">
    <property type="term" value="F:ATP binding"/>
    <property type="evidence" value="ECO:0007669"/>
    <property type="project" value="UniProtKB-KW"/>
</dbReference>
<dbReference type="GO" id="GO:0016887">
    <property type="term" value="F:ATP hydrolysis activity"/>
    <property type="evidence" value="ECO:0007669"/>
    <property type="project" value="RHEA"/>
</dbReference>
<dbReference type="GO" id="GO:0051213">
    <property type="term" value="F:dioxygenase activity"/>
    <property type="evidence" value="ECO:0007669"/>
    <property type="project" value="UniProtKB-KW"/>
</dbReference>
<dbReference type="GO" id="GO:0046872">
    <property type="term" value="F:metal ion binding"/>
    <property type="evidence" value="ECO:0007669"/>
    <property type="project" value="UniProtKB-KW"/>
</dbReference>
<dbReference type="GO" id="GO:0008174">
    <property type="term" value="F:mRNA methyltransferase activity"/>
    <property type="evidence" value="ECO:0007669"/>
    <property type="project" value="InterPro"/>
</dbReference>
<dbReference type="GO" id="GO:0003723">
    <property type="term" value="F:RNA binding"/>
    <property type="evidence" value="ECO:0007669"/>
    <property type="project" value="InterPro"/>
</dbReference>
<dbReference type="GO" id="GO:0003724">
    <property type="term" value="F:RNA helicase activity"/>
    <property type="evidence" value="ECO:0007669"/>
    <property type="project" value="UniProtKB-EC"/>
</dbReference>
<dbReference type="GO" id="GO:0003968">
    <property type="term" value="F:RNA-directed RNA polymerase activity"/>
    <property type="evidence" value="ECO:0007669"/>
    <property type="project" value="UniProtKB-KW"/>
</dbReference>
<dbReference type="GO" id="GO:0006351">
    <property type="term" value="P:DNA-templated transcription"/>
    <property type="evidence" value="ECO:0007669"/>
    <property type="project" value="InterPro"/>
</dbReference>
<dbReference type="GO" id="GO:0016556">
    <property type="term" value="P:mRNA modification"/>
    <property type="evidence" value="ECO:0007669"/>
    <property type="project" value="InterPro"/>
</dbReference>
<dbReference type="GO" id="GO:0006396">
    <property type="term" value="P:RNA processing"/>
    <property type="evidence" value="ECO:0007669"/>
    <property type="project" value="InterPro"/>
</dbReference>
<dbReference type="GO" id="GO:0039694">
    <property type="term" value="P:viral RNA genome replication"/>
    <property type="evidence" value="ECO:0007669"/>
    <property type="project" value="InterPro"/>
</dbReference>
<dbReference type="CDD" id="cd23245">
    <property type="entry name" value="Betaflexiviridae_RdRp"/>
    <property type="match status" value="1"/>
</dbReference>
<dbReference type="Gene3D" id="2.60.120.590">
    <property type="entry name" value="Alpha-ketoglutarate-dependent dioxygenase AlkB-like"/>
    <property type="match status" value="1"/>
</dbReference>
<dbReference type="Gene3D" id="3.40.50.300">
    <property type="entry name" value="P-loop containing nucleotide triphosphate hydrolases"/>
    <property type="match status" value="1"/>
</dbReference>
<dbReference type="InterPro" id="IPR027351">
    <property type="entry name" value="(+)RNA_virus_helicase_core_dom"/>
</dbReference>
<dbReference type="InterPro" id="IPR027450">
    <property type="entry name" value="AlkB-like"/>
</dbReference>
<dbReference type="InterPro" id="IPR037151">
    <property type="entry name" value="AlkB-like_sf"/>
</dbReference>
<dbReference type="InterPro" id="IPR002588">
    <property type="entry name" value="Alphavirus-like_MT_dom"/>
</dbReference>
<dbReference type="InterPro" id="IPR043502">
    <property type="entry name" value="DNA/RNA_pol_sf"/>
</dbReference>
<dbReference type="InterPro" id="IPR005123">
    <property type="entry name" value="Oxoglu/Fe-dep_dioxygenase_dom"/>
</dbReference>
<dbReference type="InterPro" id="IPR027417">
    <property type="entry name" value="P-loop_NTPase"/>
</dbReference>
<dbReference type="InterPro" id="IPR001788">
    <property type="entry name" value="RNA-dep_RNA_pol_alsuvir"/>
</dbReference>
<dbReference type="InterPro" id="IPR007094">
    <property type="entry name" value="RNA-dir_pol_PSvirus"/>
</dbReference>
<dbReference type="Pfam" id="PF13532">
    <property type="entry name" value="2OG-FeII_Oxy_2"/>
    <property type="match status" value="1"/>
</dbReference>
<dbReference type="Pfam" id="PF00978">
    <property type="entry name" value="RdRP_2"/>
    <property type="match status" value="1"/>
</dbReference>
<dbReference type="Pfam" id="PF01443">
    <property type="entry name" value="Viral_helicase1"/>
    <property type="match status" value="1"/>
</dbReference>
<dbReference type="Pfam" id="PF01660">
    <property type="entry name" value="Vmethyltransf"/>
    <property type="match status" value="1"/>
</dbReference>
<dbReference type="SUPFAM" id="SSF51197">
    <property type="entry name" value="Clavaminate synthase-like"/>
    <property type="match status" value="1"/>
</dbReference>
<dbReference type="SUPFAM" id="SSF56672">
    <property type="entry name" value="DNA/RNA polymerases"/>
    <property type="match status" value="1"/>
</dbReference>
<dbReference type="SUPFAM" id="SSF52540">
    <property type="entry name" value="P-loop containing nucleoside triphosphate hydrolases"/>
    <property type="match status" value="1"/>
</dbReference>
<dbReference type="PROSITE" id="PS51743">
    <property type="entry name" value="ALPHAVIRUS_MT"/>
    <property type="match status" value="1"/>
</dbReference>
<dbReference type="PROSITE" id="PS51471">
    <property type="entry name" value="FE2OG_OXY"/>
    <property type="match status" value="1"/>
</dbReference>
<dbReference type="PROSITE" id="PS51657">
    <property type="entry name" value="PSRV_HELICASE"/>
    <property type="match status" value="1"/>
</dbReference>
<dbReference type="PROSITE" id="PS50507">
    <property type="entry name" value="RDRP_SSRNA_POS"/>
    <property type="match status" value="1"/>
</dbReference>
<feature type="chain" id="PRO_0000401089" description="RNA replication protein">
    <location>
        <begin position="1"/>
        <end position="1707"/>
    </location>
</feature>
<feature type="domain" description="Alphavirus-like MT" evidence="3">
    <location>
        <begin position="66"/>
        <end position="242"/>
    </location>
</feature>
<feature type="domain" description="Fe2OG dioxygenase" evidence="2">
    <location>
        <begin position="645"/>
        <end position="738"/>
    </location>
</feature>
<feature type="domain" description="(+)RNA virus helicase ATP-binding">
    <location>
        <begin position="892"/>
        <end position="1051"/>
    </location>
</feature>
<feature type="domain" description="(+)RNA virus helicase C-terminal">
    <location>
        <begin position="1052"/>
        <end position="1182"/>
    </location>
</feature>
<feature type="domain" description="RdRp catalytic" evidence="1">
    <location>
        <begin position="1469"/>
        <end position="1580"/>
    </location>
</feature>
<feature type="binding site" evidence="2">
    <location>
        <position position="663"/>
    </location>
    <ligand>
        <name>Fe cation</name>
        <dbReference type="ChEBI" id="CHEBI:24875"/>
    </ligand>
</feature>
<feature type="binding site" evidence="2">
    <location>
        <position position="665"/>
    </location>
    <ligand>
        <name>Fe cation</name>
        <dbReference type="ChEBI" id="CHEBI:24875"/>
    </ligand>
</feature>
<feature type="binding site" evidence="2">
    <location>
        <position position="720"/>
    </location>
    <ligand>
        <name>Fe cation</name>
        <dbReference type="ChEBI" id="CHEBI:24875"/>
    </ligand>
</feature>
<feature type="binding site" evidence="2">
    <location>
        <position position="729"/>
    </location>
    <ligand>
        <name>2-oxoglutarate</name>
        <dbReference type="ChEBI" id="CHEBI:16810"/>
    </ligand>
</feature>
<name>RDRP_GVAIS</name>
<sequence length="1707" mass="195502">MSISVSSQRVAVSNLYTNGSEESVKAIKELKSKRLLETETRLDGLFDYYIPDTLREILTGYGMEFSVHSFQGHAHPVSKMIENHMLYRVAPNYFSSNTLVVSCKESKIKRLRLKNANNRNLNFTQYNRLVHANHHHRYENAFRELDVGNLTNLINKEDQSECIFIHDEVQYWSLDEMQRFLGSLSKVDRVVYSIIYPSEVEAGYSQSLFPEAYTFDLKDRRLVWYPDGKAEGAYTQPVNPWLLRCSKTEDSKGRSWTITKLQTIGAHHLFSAIKGSYLTEESYKYDNFTIINPNDVLKGKRGGKPLYLRARMIKPTLLYLLALKKSDSNSAVAKLRMLSSREENMDEALFVAQLAKQIKDTALYDKMGNPNLRSILSESFYDIAGSLFTRLFNRPEYDARCLEKFIRSCETTEIHVERRYMEGIRRGASFKVQNVMDWVEDDSANALSEVNFLDISWNDRVSEPYGIECIHGEGSRIRVPLSRILRAHELIAGVQTDVEINFPRYVCSSRALIHFRQYLIKLGRFSFMESRAIKDIEDIQAGLEEGVITEEEAELRLLPTTKPKITEIHMDDDTPGTSGESDVEKFKSVRSLCREEIYSEKLKGREVAFYSRHSKEYKYNGGSHRSLGWDEALNELTQELGLDDSYDHCLIQRYTAGGSIGFHADDEPCYLPGGSVVTVNLHGDATFEVKENQSGKIEKKELHDGDVYVMGPGMQQTHKHRVTSHTDGRCSITLRNKTVDYEARKGDEDSEYEEDKAELDEGIDYLQKNQGNMCSLKAFADHMQLSTPSVIAIVNGASPQTLREIEDGGYSLATLVNLSKALDFPIAIHGERGYAETPGSYRRLHLKITSGHVEPFEGVTSKGGFREAMLLGDGVGVGHFRVDKAKADRLAQSFYNGNTGVLLGKYNKGKMHTGEIEEPKEVLTAFGFAGSGKSHWCQTILKHCSVEKVLVISPRKVLRDDWVAKISKKHRVVTFEVAFMDDYGCKDIVIDEIGLLPPGYIDLVIAAHQPRTLVLLGDPLQSTYHSKRDNVVLEASQEDVFNRVRGKLPYLCYSHRLPRNCKLFEIECMGAESEKRVVYRSNRLKDEPTICATRAMKEEKGSGWYTVSETQGLSFKSCLIYLDEHWAKKEDEDVMVALTRSRGEIGIHVTPALKKKLITNAKSTLLKKVLKGETYRRSEIVAMVRKHIPETTVLFEESRLAETVDYEARLAGDPYLKSLLALYDEIEMEDIEIEEPVTLEPTKTHLALSTKMNELAPFDLKAKEHREQHTEAGRTEQIDENGYQGEVGDPMTHKALYLRHTSDDTATFMMSVKKRLRFRNYEANRRKYKTCHGIGHQMFSVFKDTYQLKEIDSLPELERCEMEFMKKRIEKSTGLIEKHAGRSDPDWPSNYLKIFLKQQTCTKMEKRGVDAKAGQTIACFAHSVLCRFGPILRQTEKALRELLPEKLMIYSQKKYMDLDKWAKTWVESMMGTDSDYEAFDRSQDEKVLDLEVEVLRFFLWPEDLIREYEELKLMMGCALGDLAVMRFSGEFGTFFFNTVCNMVFSCMRYHIDRNTPMCFAGDDMYSPGILRVKKDYEATLDQLTLKAKVHISEEPLFCGWRMSPFGIIKEPNLILDRWKIALRSGNLSLCLVNYAIEASFGYRLSEHLYDVNIDVDAQQELVREIVIKKHLLPKKISDLFSEDECERHSDGDEDFLSNDVARLYRIE</sequence>
<comment type="function">
    <text evidence="4">RNA replication. The central part of this protein possibly functions as an ATP-binding helicase (Probable).</text>
</comment>
<comment type="catalytic activity">
    <reaction evidence="1">
        <text>RNA(n) + a ribonucleoside 5'-triphosphate = RNA(n+1) + diphosphate</text>
        <dbReference type="Rhea" id="RHEA:21248"/>
        <dbReference type="Rhea" id="RHEA-COMP:14527"/>
        <dbReference type="Rhea" id="RHEA-COMP:17342"/>
        <dbReference type="ChEBI" id="CHEBI:33019"/>
        <dbReference type="ChEBI" id="CHEBI:61557"/>
        <dbReference type="ChEBI" id="CHEBI:140395"/>
        <dbReference type="EC" id="2.7.7.48"/>
    </reaction>
</comment>
<comment type="catalytic activity">
    <reaction>
        <text>ATP + H2O = ADP + phosphate + H(+)</text>
        <dbReference type="Rhea" id="RHEA:13065"/>
        <dbReference type="ChEBI" id="CHEBI:15377"/>
        <dbReference type="ChEBI" id="CHEBI:15378"/>
        <dbReference type="ChEBI" id="CHEBI:30616"/>
        <dbReference type="ChEBI" id="CHEBI:43474"/>
        <dbReference type="ChEBI" id="CHEBI:456216"/>
        <dbReference type="EC" id="3.6.4.13"/>
    </reaction>
</comment>
<comment type="cofactor">
    <cofactor evidence="2">
        <name>Fe(2+)</name>
        <dbReference type="ChEBI" id="CHEBI:29033"/>
    </cofactor>
    <text evidence="2">Binds 1 Fe(2+) ion per subunit.</text>
</comment>
<comment type="similarity">
    <text evidence="4">Belongs to the potexviruses/carlaviruses RNA replication protein family.</text>
</comment>
<organism>
    <name type="scientific">Grapevine virus A (isolate Is 151)</name>
    <name type="common">GVA</name>
    <dbReference type="NCBI Taxonomy" id="651358"/>
    <lineage>
        <taxon>Viruses</taxon>
        <taxon>Riboviria</taxon>
        <taxon>Orthornavirae</taxon>
        <taxon>Kitrinoviricota</taxon>
        <taxon>Alsuviricetes</taxon>
        <taxon>Tymovirales</taxon>
        <taxon>Betaflexiviridae</taxon>
        <taxon>Trivirinae</taxon>
        <taxon>Vitivirus</taxon>
        <taxon>Grapevine virus A</taxon>
    </lineage>
</organism>
<accession>Q67704</accession>
<organismHost>
    <name type="scientific">Vitis vinifera</name>
    <name type="common">Grape</name>
    <dbReference type="NCBI Taxonomy" id="29760"/>
</organismHost>
<protein>
    <recommendedName>
        <fullName>RNA replication protein</fullName>
    </recommendedName>
    <domain>
        <recommendedName>
            <fullName>RNA-directed RNA polymerase</fullName>
            <ecNumber>2.7.7.48</ecNumber>
        </recommendedName>
    </domain>
    <domain>
        <recommendedName>
            <fullName>Helicase</fullName>
            <ecNumber>3.6.4.13</ecNumber>
        </recommendedName>
    </domain>
</protein>